<accession>Q67877</accession>
<sequence length="154" mass="16630">MAARLCCQLDPARDVLCLRPVGAESRGRPFSGPLGTLSSPSLSAVSTDHGAHLSLRGLPVCAFSSAGPCALRFTSARRMETTVNAHQILPKVLHKRTLGLPAMSTTDLEAYFKDCVFKDWEELGEEIRLKVFVLGGCRHKLVCAPAPCNFFTSA</sequence>
<feature type="chain" id="PRO_0000319912" description="Protein X">
    <location>
        <begin position="1"/>
        <end position="154"/>
    </location>
</feature>
<feature type="region of interest" description="Mitochondrial targeting sequence" evidence="1">
    <location>
        <begin position="68"/>
        <end position="117"/>
    </location>
</feature>
<organismHost>
    <name type="scientific">Homo sapiens</name>
    <name type="common">Human</name>
    <dbReference type="NCBI Taxonomy" id="9606"/>
</organismHost>
<organismHost>
    <name type="scientific">Pan troglodytes</name>
    <name type="common">Chimpanzee</name>
    <dbReference type="NCBI Taxonomy" id="9598"/>
</organismHost>
<keyword id="KW-1074">Activation of host NF-kappa-B by virus</keyword>
<keyword id="KW-0010">Activator</keyword>
<keyword id="KW-0053">Apoptosis</keyword>
<keyword id="KW-1035">Host cytoplasm</keyword>
<keyword id="KW-1079">Host G2/M cell cycle arrest by virus</keyword>
<keyword id="KW-1045">Host mitochondrion</keyword>
<keyword id="KW-1048">Host nucleus</keyword>
<keyword id="KW-0945">Host-virus interaction</keyword>
<keyword id="KW-1121">Modulation of host cell cycle by virus</keyword>
<keyword id="KW-0804">Transcription</keyword>
<keyword id="KW-0805">Transcription regulation</keyword>
<protein>
    <recommendedName>
        <fullName evidence="1">Protein X</fullName>
    </recommendedName>
    <alternativeName>
        <fullName evidence="1">HBx</fullName>
    </alternativeName>
    <alternativeName>
        <fullName evidence="1">Peptide X</fullName>
    </alternativeName>
    <alternativeName>
        <fullName evidence="1">pX</fullName>
    </alternativeName>
</protein>
<evidence type="ECO:0000255" key="1">
    <source>
        <dbReference type="HAMAP-Rule" id="MF_04074"/>
    </source>
</evidence>
<comment type="function">
    <text evidence="1">Multifunctional protein that plays a role in silencing host antiviral defenses and promoting viral transcription. Does not seem to be essential for HBV infection. May be directly involved in development of cirrhosis and liver cancer (hepatocellular carcinoma). Most of cytosolic activities involve modulation of cytosolic calcium. The effect on apoptosis is controversial depending on the cell types in which the studies have been conducted. May induce apoptosis by localizing in mitochondria and causing loss of mitochondrial membrane potential. May also modulate apoptosis by binding host CFLAR, a key regulator of the death-inducing signaling complex (DISC). Promotes viral transcription by using the host E3 ubiquitin ligase DDB1 to target the SMC5-SMC6 complex to proteasomal degradation. This host complex would otherwise bind to viral episomal DNA, and prevents its transcription. Moderately stimulates transcription of many different viral and cellular transcription elements. Promoters and enhancers stimulated by HBx contain DNA binding sites for NF-kappa-B, AP-1, AP-2, c-EBP, ATF/CREB, or the calcium-activated factor NF-AT.</text>
</comment>
<comment type="subunit">
    <text evidence="1">May form homodimer. May interact with host CEBPA, CFLAR, CREB1, DDB1, E4F1, HBXIP, HSPD1/HSP60, NFKBIA, POLR2E and SMAD4. Interacts with host SMC5-SMC6 complex and induces its degradation. Interacts with host TRPC4AP; leading to prevent ubiquitination of TRPC4AP. Interacts with host PLSCR1; this interaction promotes ubiquitination and degradation of HBx and impairs HBx-mediated cell proliferation.</text>
</comment>
<comment type="subcellular location">
    <subcellularLocation>
        <location evidence="1">Host cytoplasm</location>
    </subcellularLocation>
    <subcellularLocation>
        <location evidence="1">Host nucleus</location>
    </subcellularLocation>
    <subcellularLocation>
        <location evidence="1">Host mitochondrion</location>
    </subcellularLocation>
    <text evidence="1">Mainly cytoplasmic as only a fraction is detected in the nucleus. In cytoplasm, a minor fraction associates with mitochondria or proteasomes.</text>
</comment>
<comment type="PTM">
    <text evidence="1">A fraction may be phosphorylated in insect cells and HepG2 cells, a human hepatoblastoma cell line. Phosphorylated in vitro by host protein kinase C or mitogen-activated protein kinase. N-acetylated in insect cells.</text>
</comment>
<comment type="similarity">
    <text evidence="1">Belongs to the orthohepadnavirus protein X family.</text>
</comment>
<comment type="caution">
    <text>Transcriptional activities should be taken with a grain of salt. As of 2007, all studies demonstrating in vivo interaction between protein X and transcriptional components were performed with significant overexpression of both proteins and in the absence of viral infection.</text>
</comment>
<reference key="1">
    <citation type="submission" date="1992-03" db="EMBL/GenBank/DDBJ databases">
        <title>Sequence analysis of HBV genomes isolated from patients with HBsAg negative chronic liver disease.</title>
        <authorList>
            <person name="Lai M.E."/>
            <person name="Mazzoleni A.P."/>
            <person name="Balestrieri A."/>
            <person name="Melis A."/>
            <person name="Porru A."/>
        </authorList>
    </citation>
    <scope>NUCLEOTIDE SEQUENCE [GENOMIC DNA]</scope>
</reference>
<reference key="2">
    <citation type="journal article" date="2004" name="J. Virol.">
        <title>The enigmatic X gene of hepatitis B virus.</title>
        <authorList>
            <person name="Bouchard M.J."/>
            <person name="Schneider R.J."/>
        </authorList>
    </citation>
    <scope>REVIEW</scope>
</reference>
<reference key="3">
    <citation type="journal article" date="2006" name="Cancer Sci.">
        <title>Molecular functions and biological roles of hepatitis B virus x protein.</title>
        <authorList>
            <person name="Tang H."/>
            <person name="Oishi N."/>
            <person name="Kaneko S."/>
            <person name="Murakami S."/>
        </authorList>
    </citation>
    <scope>REVIEW</scope>
</reference>
<organism>
    <name type="scientific">Hepatitis B virus genotype D subtype ayw (isolate Italy/CI/1992)</name>
    <name type="common">HBV-D</name>
    <dbReference type="NCBI Taxonomy" id="489489"/>
    <lineage>
        <taxon>Viruses</taxon>
        <taxon>Riboviria</taxon>
        <taxon>Pararnavirae</taxon>
        <taxon>Artverviricota</taxon>
        <taxon>Revtraviricetes</taxon>
        <taxon>Blubervirales</taxon>
        <taxon>Hepadnaviridae</taxon>
        <taxon>Orthohepadnavirus</taxon>
        <taxon>Hepatitis B virus</taxon>
        <taxon>hepatitis B virus genotype D</taxon>
    </lineage>
</organism>
<gene>
    <name evidence="1" type="primary">X</name>
</gene>
<dbReference type="EMBL" id="X65258">
    <property type="protein sequence ID" value="CAA46355.1"/>
    <property type="molecule type" value="Genomic_DNA"/>
</dbReference>
<dbReference type="PIR" id="S20751">
    <property type="entry name" value="S20751"/>
</dbReference>
<dbReference type="SMR" id="Q67877"/>
<dbReference type="Proteomes" id="UP000008282">
    <property type="component" value="Genome"/>
</dbReference>
<dbReference type="GO" id="GO:0033650">
    <property type="term" value="C:host cell mitochondrion"/>
    <property type="evidence" value="ECO:0007669"/>
    <property type="project" value="UniProtKB-SubCell"/>
</dbReference>
<dbReference type="GO" id="GO:0042025">
    <property type="term" value="C:host cell nucleus"/>
    <property type="evidence" value="ECO:0007669"/>
    <property type="project" value="UniProtKB-SubCell"/>
</dbReference>
<dbReference type="GO" id="GO:0006351">
    <property type="term" value="P:DNA-templated transcription"/>
    <property type="evidence" value="ECO:0007669"/>
    <property type="project" value="UniProtKB-UniRule"/>
</dbReference>
<dbReference type="GO" id="GO:0085033">
    <property type="term" value="P:symbiont-mediated activation of host NF-kappaB cascade"/>
    <property type="evidence" value="ECO:0007669"/>
    <property type="project" value="UniProtKB-UniRule"/>
</dbReference>
<dbReference type="GO" id="GO:0039592">
    <property type="term" value="P:symbiont-mediated arrest of host cell cycle during G2/M transition"/>
    <property type="evidence" value="ECO:0007669"/>
    <property type="project" value="UniProtKB-UniRule"/>
</dbReference>
<dbReference type="GO" id="GO:0019079">
    <property type="term" value="P:viral genome replication"/>
    <property type="evidence" value="ECO:0007669"/>
    <property type="project" value="UniProtKB-UniRule"/>
</dbReference>
<dbReference type="HAMAP" id="MF_04074">
    <property type="entry name" value="HBV_X"/>
    <property type="match status" value="1"/>
</dbReference>
<dbReference type="InterPro" id="IPR000236">
    <property type="entry name" value="Transactivation_prot_X"/>
</dbReference>
<dbReference type="Pfam" id="PF00739">
    <property type="entry name" value="X"/>
    <property type="match status" value="1"/>
</dbReference>
<proteinExistence type="inferred from homology"/>
<name>X_HBVD6</name>